<comment type="function">
    <text evidence="1">Condenses 4-methyl-5-(beta-hydroxyethyl)thiazole monophosphate (THZ-P) and 2-methyl-4-amino-5-hydroxymethyl pyrimidine pyrophosphate (HMP-PP) to form thiamine monophosphate (TMP).</text>
</comment>
<comment type="catalytic activity">
    <reaction evidence="1">
        <text>2-[(2R,5Z)-2-carboxy-4-methylthiazol-5(2H)-ylidene]ethyl phosphate + 4-amino-2-methyl-5-(diphosphooxymethyl)pyrimidine + 2 H(+) = thiamine phosphate + CO2 + diphosphate</text>
        <dbReference type="Rhea" id="RHEA:47844"/>
        <dbReference type="ChEBI" id="CHEBI:15378"/>
        <dbReference type="ChEBI" id="CHEBI:16526"/>
        <dbReference type="ChEBI" id="CHEBI:33019"/>
        <dbReference type="ChEBI" id="CHEBI:37575"/>
        <dbReference type="ChEBI" id="CHEBI:57841"/>
        <dbReference type="ChEBI" id="CHEBI:62899"/>
        <dbReference type="EC" id="2.5.1.3"/>
    </reaction>
</comment>
<comment type="catalytic activity">
    <reaction evidence="1">
        <text>2-(2-carboxy-4-methylthiazol-5-yl)ethyl phosphate + 4-amino-2-methyl-5-(diphosphooxymethyl)pyrimidine + 2 H(+) = thiamine phosphate + CO2 + diphosphate</text>
        <dbReference type="Rhea" id="RHEA:47848"/>
        <dbReference type="ChEBI" id="CHEBI:15378"/>
        <dbReference type="ChEBI" id="CHEBI:16526"/>
        <dbReference type="ChEBI" id="CHEBI:33019"/>
        <dbReference type="ChEBI" id="CHEBI:37575"/>
        <dbReference type="ChEBI" id="CHEBI:57841"/>
        <dbReference type="ChEBI" id="CHEBI:62890"/>
        <dbReference type="EC" id="2.5.1.3"/>
    </reaction>
</comment>
<comment type="catalytic activity">
    <reaction evidence="1">
        <text>4-methyl-5-(2-phosphooxyethyl)-thiazole + 4-amino-2-methyl-5-(diphosphooxymethyl)pyrimidine + H(+) = thiamine phosphate + diphosphate</text>
        <dbReference type="Rhea" id="RHEA:22328"/>
        <dbReference type="ChEBI" id="CHEBI:15378"/>
        <dbReference type="ChEBI" id="CHEBI:33019"/>
        <dbReference type="ChEBI" id="CHEBI:37575"/>
        <dbReference type="ChEBI" id="CHEBI:57841"/>
        <dbReference type="ChEBI" id="CHEBI:58296"/>
        <dbReference type="EC" id="2.5.1.3"/>
    </reaction>
</comment>
<comment type="cofactor">
    <cofactor evidence="1">
        <name>Mg(2+)</name>
        <dbReference type="ChEBI" id="CHEBI:18420"/>
    </cofactor>
    <text evidence="1">Binds 1 Mg(2+) ion per subunit.</text>
</comment>
<comment type="pathway">
    <text evidence="1">Cofactor biosynthesis; thiamine diphosphate biosynthesis; thiamine phosphate from 4-amino-2-methyl-5-diphosphomethylpyrimidine and 4-methyl-5-(2-phosphoethyl)-thiazole: step 1/1.</text>
</comment>
<comment type="similarity">
    <text evidence="1">Belongs to the thiamine-phosphate synthase family.</text>
</comment>
<feature type="chain" id="PRO_1000008186" description="Thiamine-phosphate synthase">
    <location>
        <begin position="1"/>
        <end position="207"/>
    </location>
</feature>
<feature type="binding site" evidence="1">
    <location>
        <begin position="38"/>
        <end position="42"/>
    </location>
    <ligand>
        <name>4-amino-2-methyl-5-(diphosphooxymethyl)pyrimidine</name>
        <dbReference type="ChEBI" id="CHEBI:57841"/>
    </ligand>
</feature>
<feature type="binding site" evidence="1">
    <location>
        <position position="70"/>
    </location>
    <ligand>
        <name>4-amino-2-methyl-5-(diphosphooxymethyl)pyrimidine</name>
        <dbReference type="ChEBI" id="CHEBI:57841"/>
    </ligand>
</feature>
<feature type="binding site" evidence="1">
    <location>
        <position position="71"/>
    </location>
    <ligand>
        <name>Mg(2+)</name>
        <dbReference type="ChEBI" id="CHEBI:18420"/>
    </ligand>
</feature>
<feature type="binding site" evidence="1">
    <location>
        <position position="90"/>
    </location>
    <ligand>
        <name>Mg(2+)</name>
        <dbReference type="ChEBI" id="CHEBI:18420"/>
    </ligand>
</feature>
<feature type="binding site" evidence="1">
    <location>
        <position position="109"/>
    </location>
    <ligand>
        <name>4-amino-2-methyl-5-(diphosphooxymethyl)pyrimidine</name>
        <dbReference type="ChEBI" id="CHEBI:57841"/>
    </ligand>
</feature>
<feature type="binding site" evidence="1">
    <location>
        <begin position="136"/>
        <end position="138"/>
    </location>
    <ligand>
        <name>2-[(2R,5Z)-2-carboxy-4-methylthiazol-5(2H)-ylidene]ethyl phosphate</name>
        <dbReference type="ChEBI" id="CHEBI:62899"/>
    </ligand>
</feature>
<feature type="binding site" evidence="1">
    <location>
        <position position="139"/>
    </location>
    <ligand>
        <name>4-amino-2-methyl-5-(diphosphooxymethyl)pyrimidine</name>
        <dbReference type="ChEBI" id="CHEBI:57841"/>
    </ligand>
</feature>
<feature type="binding site" evidence="1">
    <location>
        <position position="165"/>
    </location>
    <ligand>
        <name>2-[(2R,5Z)-2-carboxy-4-methylthiazol-5(2H)-ylidene]ethyl phosphate</name>
        <dbReference type="ChEBI" id="CHEBI:62899"/>
    </ligand>
</feature>
<feature type="binding site" evidence="1">
    <location>
        <begin position="185"/>
        <end position="186"/>
    </location>
    <ligand>
        <name>2-[(2R,5Z)-2-carboxy-4-methylthiazol-5(2H)-ylidene]ethyl phosphate</name>
        <dbReference type="ChEBI" id="CHEBI:62899"/>
    </ligand>
</feature>
<dbReference type="EC" id="2.5.1.3" evidence="1"/>
<dbReference type="EMBL" id="CP000050">
    <property type="protein sequence ID" value="AAY47969.1"/>
    <property type="molecule type" value="Genomic_DNA"/>
</dbReference>
<dbReference type="RefSeq" id="WP_011038371.1">
    <property type="nucleotide sequence ID" value="NZ_CP155948.1"/>
</dbReference>
<dbReference type="SMR" id="Q4UYA4"/>
<dbReference type="KEGG" id="xcb:XC_0895"/>
<dbReference type="HOGENOM" id="CLU_018272_3_1_6"/>
<dbReference type="UniPathway" id="UPA00060">
    <property type="reaction ID" value="UER00141"/>
</dbReference>
<dbReference type="Proteomes" id="UP000000420">
    <property type="component" value="Chromosome"/>
</dbReference>
<dbReference type="GO" id="GO:0005737">
    <property type="term" value="C:cytoplasm"/>
    <property type="evidence" value="ECO:0007669"/>
    <property type="project" value="TreeGrafter"/>
</dbReference>
<dbReference type="GO" id="GO:0000287">
    <property type="term" value="F:magnesium ion binding"/>
    <property type="evidence" value="ECO:0007669"/>
    <property type="project" value="UniProtKB-UniRule"/>
</dbReference>
<dbReference type="GO" id="GO:0004789">
    <property type="term" value="F:thiamine-phosphate diphosphorylase activity"/>
    <property type="evidence" value="ECO:0007669"/>
    <property type="project" value="UniProtKB-UniRule"/>
</dbReference>
<dbReference type="GO" id="GO:0009228">
    <property type="term" value="P:thiamine biosynthetic process"/>
    <property type="evidence" value="ECO:0007669"/>
    <property type="project" value="UniProtKB-KW"/>
</dbReference>
<dbReference type="GO" id="GO:0009229">
    <property type="term" value="P:thiamine diphosphate biosynthetic process"/>
    <property type="evidence" value="ECO:0007669"/>
    <property type="project" value="UniProtKB-UniRule"/>
</dbReference>
<dbReference type="CDD" id="cd00564">
    <property type="entry name" value="TMP_TenI"/>
    <property type="match status" value="1"/>
</dbReference>
<dbReference type="FunFam" id="3.20.20.70:FF:000096">
    <property type="entry name" value="Thiamine-phosphate synthase"/>
    <property type="match status" value="1"/>
</dbReference>
<dbReference type="Gene3D" id="3.20.20.70">
    <property type="entry name" value="Aldolase class I"/>
    <property type="match status" value="1"/>
</dbReference>
<dbReference type="HAMAP" id="MF_00097">
    <property type="entry name" value="TMP_synthase"/>
    <property type="match status" value="1"/>
</dbReference>
<dbReference type="InterPro" id="IPR013785">
    <property type="entry name" value="Aldolase_TIM"/>
</dbReference>
<dbReference type="InterPro" id="IPR036206">
    <property type="entry name" value="ThiamineP_synth_sf"/>
</dbReference>
<dbReference type="InterPro" id="IPR022998">
    <property type="entry name" value="ThiamineP_synth_TenI"/>
</dbReference>
<dbReference type="InterPro" id="IPR034291">
    <property type="entry name" value="TMP_synthase"/>
</dbReference>
<dbReference type="NCBIfam" id="TIGR00693">
    <property type="entry name" value="thiE"/>
    <property type="match status" value="1"/>
</dbReference>
<dbReference type="PANTHER" id="PTHR20857">
    <property type="entry name" value="THIAMINE-PHOSPHATE PYROPHOSPHORYLASE"/>
    <property type="match status" value="1"/>
</dbReference>
<dbReference type="PANTHER" id="PTHR20857:SF15">
    <property type="entry name" value="THIAMINE-PHOSPHATE SYNTHASE"/>
    <property type="match status" value="1"/>
</dbReference>
<dbReference type="Pfam" id="PF02581">
    <property type="entry name" value="TMP-TENI"/>
    <property type="match status" value="1"/>
</dbReference>
<dbReference type="SUPFAM" id="SSF51391">
    <property type="entry name" value="Thiamin phosphate synthase"/>
    <property type="match status" value="1"/>
</dbReference>
<reference key="1">
    <citation type="journal article" date="2005" name="Genome Res.">
        <title>Comparative and functional genomic analyses of the pathogenicity of phytopathogen Xanthomonas campestris pv. campestris.</title>
        <authorList>
            <person name="Qian W."/>
            <person name="Jia Y."/>
            <person name="Ren S.-X."/>
            <person name="He Y.-Q."/>
            <person name="Feng J.-X."/>
            <person name="Lu L.-F."/>
            <person name="Sun Q."/>
            <person name="Ying G."/>
            <person name="Tang D.-J."/>
            <person name="Tang H."/>
            <person name="Wu W."/>
            <person name="Hao P."/>
            <person name="Wang L."/>
            <person name="Jiang B.-L."/>
            <person name="Zeng S."/>
            <person name="Gu W.-Y."/>
            <person name="Lu G."/>
            <person name="Rong L."/>
            <person name="Tian Y."/>
            <person name="Yao Z."/>
            <person name="Fu G."/>
            <person name="Chen B."/>
            <person name="Fang R."/>
            <person name="Qiang B."/>
            <person name="Chen Z."/>
            <person name="Zhao G.-P."/>
            <person name="Tang J.-L."/>
            <person name="He C."/>
        </authorList>
    </citation>
    <scope>NUCLEOTIDE SEQUENCE [LARGE SCALE GENOMIC DNA]</scope>
    <source>
        <strain>8004</strain>
    </source>
</reference>
<accession>Q4UYA4</accession>
<name>THIE_XANC8</name>
<protein>
    <recommendedName>
        <fullName evidence="1">Thiamine-phosphate synthase</fullName>
        <shortName evidence="1">TP synthase</shortName>
        <shortName evidence="1">TPS</shortName>
        <ecNumber evidence="1">2.5.1.3</ecNumber>
    </recommendedName>
    <alternativeName>
        <fullName evidence="1">Thiamine-phosphate pyrophosphorylase</fullName>
        <shortName evidence="1">TMP pyrophosphorylase</shortName>
        <shortName evidence="1">TMP-PPase</shortName>
    </alternativeName>
</protein>
<evidence type="ECO:0000255" key="1">
    <source>
        <dbReference type="HAMAP-Rule" id="MF_00097"/>
    </source>
</evidence>
<organism>
    <name type="scientific">Xanthomonas campestris pv. campestris (strain 8004)</name>
    <dbReference type="NCBI Taxonomy" id="314565"/>
    <lineage>
        <taxon>Bacteria</taxon>
        <taxon>Pseudomonadati</taxon>
        <taxon>Pseudomonadota</taxon>
        <taxon>Gammaproteobacteria</taxon>
        <taxon>Lysobacterales</taxon>
        <taxon>Lysobacteraceae</taxon>
        <taxon>Xanthomonas</taxon>
    </lineage>
</organism>
<proteinExistence type="inferred from homology"/>
<gene>
    <name evidence="1" type="primary">thiE</name>
    <name type="ordered locus">XC_0895</name>
</gene>
<keyword id="KW-0460">Magnesium</keyword>
<keyword id="KW-0479">Metal-binding</keyword>
<keyword id="KW-0784">Thiamine biosynthesis</keyword>
<keyword id="KW-0808">Transferase</keyword>
<sequence length="207" mass="21236">MPTLQNARGVYLITPDTRDTAQLLACTLPLLPHITWLQYRNKQADAALRLAQATALRAACTAHGVPLIINDDAALAQQVGADGVHLGEDDGEVAAARALLGASAIIGVSCYDEIERARAAAAAGANYVAFGAFFPTATKVTTRRATPALLHEAAALGLPRVAIGGITPSQVPELVTAGADLIAVVSGVYAAADPVAAVQAYRAGFTQ</sequence>